<comment type="function">
    <text evidence="1">Transcription factor that binds to the GCC-box pathogenesis-related promoter element. Involved in the regulation of gene expression by stress factors and by components of stress signal transduction pathways. Probably acts as a transcriptional activator (By similarity).</text>
</comment>
<comment type="subcellular location">
    <subcellularLocation>
        <location evidence="4">Nucleus</location>
    </subcellularLocation>
</comment>
<comment type="tissue specificity">
    <text evidence="3">Expressed in roots, mostly in root tip and lateral root tips.</text>
</comment>
<comment type="induction">
    <text evidence="3">Induced by ethylene.</text>
</comment>
<comment type="domain">
    <text evidence="1">The AP2/ERF domain binds specifically to the 5'-GCCGCC-3' motif. The affinity of this binding is higher if the seventh amino-acid of this domain is basic (By similarity).</text>
</comment>
<comment type="similarity">
    <text evidence="4">Belongs to the ethylene-response factor family. Class 3 subfamily.</text>
</comment>
<comment type="caution">
    <text evidence="4">Was named ERF4 but it corresponds to Arabidopsis ERF5.</text>
</comment>
<dbReference type="EMBL" id="AB016266">
    <property type="protein sequence ID" value="BAA97124.1"/>
    <property type="molecule type" value="Genomic_DNA"/>
</dbReference>
<dbReference type="RefSeq" id="XP_009804351.1">
    <property type="nucleotide sequence ID" value="XM_009806049.1"/>
</dbReference>
<dbReference type="SMR" id="Q9LW48"/>
<dbReference type="STRING" id="4096.Q9LW48"/>
<dbReference type="GeneID" id="104249597"/>
<dbReference type="eggNOG" id="ENOG502RXE3">
    <property type="taxonomic scope" value="Eukaryota"/>
</dbReference>
<dbReference type="Proteomes" id="UP000189701">
    <property type="component" value="Unplaced"/>
</dbReference>
<dbReference type="GO" id="GO:0005634">
    <property type="term" value="C:nucleus"/>
    <property type="evidence" value="ECO:0007669"/>
    <property type="project" value="UniProtKB-SubCell"/>
</dbReference>
<dbReference type="GO" id="GO:0003700">
    <property type="term" value="F:DNA-binding transcription factor activity"/>
    <property type="evidence" value="ECO:0007669"/>
    <property type="project" value="InterPro"/>
</dbReference>
<dbReference type="GO" id="GO:0000976">
    <property type="term" value="F:transcription cis-regulatory region binding"/>
    <property type="evidence" value="ECO:0007669"/>
    <property type="project" value="UniProtKB-ARBA"/>
</dbReference>
<dbReference type="GO" id="GO:0006952">
    <property type="term" value="P:defense response"/>
    <property type="evidence" value="ECO:0007669"/>
    <property type="project" value="UniProtKB-KW"/>
</dbReference>
<dbReference type="GO" id="GO:0009873">
    <property type="term" value="P:ethylene-activated signaling pathway"/>
    <property type="evidence" value="ECO:0007669"/>
    <property type="project" value="UniProtKB-KW"/>
</dbReference>
<dbReference type="CDD" id="cd00018">
    <property type="entry name" value="AP2"/>
    <property type="match status" value="1"/>
</dbReference>
<dbReference type="FunFam" id="3.30.730.10:FF:000001">
    <property type="entry name" value="Ethylene-responsive transcription factor 2"/>
    <property type="match status" value="1"/>
</dbReference>
<dbReference type="Gene3D" id="3.30.730.10">
    <property type="entry name" value="AP2/ERF domain"/>
    <property type="match status" value="1"/>
</dbReference>
<dbReference type="InterPro" id="IPR001471">
    <property type="entry name" value="AP2/ERF_dom"/>
</dbReference>
<dbReference type="InterPro" id="IPR036955">
    <property type="entry name" value="AP2/ERF_dom_sf"/>
</dbReference>
<dbReference type="InterPro" id="IPR016177">
    <property type="entry name" value="DNA-bd_dom_sf"/>
</dbReference>
<dbReference type="InterPro" id="IPR044808">
    <property type="entry name" value="ERF_plant"/>
</dbReference>
<dbReference type="PANTHER" id="PTHR31190">
    <property type="entry name" value="DNA-BINDING DOMAIN"/>
    <property type="match status" value="1"/>
</dbReference>
<dbReference type="PANTHER" id="PTHR31190:SF499">
    <property type="entry name" value="ETHYLENE-RESPONSIVE TRANSCRIPTION FACTOR ERF105"/>
    <property type="match status" value="1"/>
</dbReference>
<dbReference type="Pfam" id="PF00847">
    <property type="entry name" value="AP2"/>
    <property type="match status" value="1"/>
</dbReference>
<dbReference type="PRINTS" id="PR00367">
    <property type="entry name" value="ETHRSPELEMNT"/>
</dbReference>
<dbReference type="SMART" id="SM00380">
    <property type="entry name" value="AP2"/>
    <property type="match status" value="1"/>
</dbReference>
<dbReference type="SUPFAM" id="SSF54171">
    <property type="entry name" value="DNA-binding domain"/>
    <property type="match status" value="1"/>
</dbReference>
<dbReference type="PROSITE" id="PS51032">
    <property type="entry name" value="AP2_ERF"/>
    <property type="match status" value="1"/>
</dbReference>
<proteinExistence type="evidence at transcript level"/>
<name>ERF5_NICSY</name>
<protein>
    <recommendedName>
        <fullName>Ethylene-responsive transcription factor 5</fullName>
    </recommendedName>
    <alternativeName>
        <fullName>Ethylene-responsive element-binding factor 4</fullName>
        <shortName>EREBP-4</shortName>
    </alternativeName>
    <alternativeName>
        <fullName>Ethylene-responsive element-binding factor 5 homolog</fullName>
    </alternativeName>
    <alternativeName>
        <fullName>NsERF4</fullName>
    </alternativeName>
</protein>
<organism>
    <name type="scientific">Nicotiana sylvestris</name>
    <name type="common">Wood tobacco</name>
    <name type="synonym">South American tobacco</name>
    <dbReference type="NCBI Taxonomy" id="4096"/>
    <lineage>
        <taxon>Eukaryota</taxon>
        <taxon>Viridiplantae</taxon>
        <taxon>Streptophyta</taxon>
        <taxon>Embryophyta</taxon>
        <taxon>Tracheophyta</taxon>
        <taxon>Spermatophyta</taxon>
        <taxon>Magnoliopsida</taxon>
        <taxon>eudicotyledons</taxon>
        <taxon>Gunneridae</taxon>
        <taxon>Pentapetalae</taxon>
        <taxon>asterids</taxon>
        <taxon>lamiids</taxon>
        <taxon>Solanales</taxon>
        <taxon>Solanaceae</taxon>
        <taxon>Nicotianoideae</taxon>
        <taxon>Nicotianeae</taxon>
        <taxon>Nicotiana</taxon>
    </lineage>
</organism>
<evidence type="ECO:0000250" key="1"/>
<evidence type="ECO:0000255" key="2">
    <source>
        <dbReference type="PROSITE-ProRule" id="PRU00366"/>
    </source>
</evidence>
<evidence type="ECO:0000269" key="3">
    <source>
    </source>
</evidence>
<evidence type="ECO:0000305" key="4"/>
<accession>Q9LW48</accession>
<keyword id="KW-0010">Activator</keyword>
<keyword id="KW-0238">DNA-binding</keyword>
<keyword id="KW-0936">Ethylene signaling pathway</keyword>
<keyword id="KW-0539">Nucleus</keyword>
<keyword id="KW-0611">Plant defense</keyword>
<keyword id="KW-1185">Reference proteome</keyword>
<keyword id="KW-0804">Transcription</keyword>
<keyword id="KW-0805">Transcription regulation</keyword>
<sequence>MASPQENSTTLDLIRQHLLDDNVFLEHYCSETETTTLIYSQSSSSSESLDQSFSFEPTLNYATTAQSSNLEVSTFFNNSKTEFDSFEFGTIPNVSAARSSSLKQTSFKERKPSLNIAIPVKQEVVQKVELAPTEKKHYRGVRQRPWGKFAAEIRDPNRKGTRVWLGTFDTAIEAAKAYDRAAYKLRGSKAIVNFPLEVANFKQEFNNEIRPLVNSSRKRVRETVNEEQLVINKEMKIEEERVPTAPLTPSSWSAIWDSGDGKGIFEVPPLSPFGAYSQLVMI</sequence>
<reference key="1">
    <citation type="journal article" date="2000" name="Plant Cell Physiol.">
        <title>Characterization of gene expression of NsERFs, transcription factors of basic PR genes from Nicotiana sylvestris.</title>
        <authorList>
            <person name="Kitajima S."/>
            <person name="Koyama T."/>
            <person name="Ohme-Takagi M."/>
            <person name="Shinshi H."/>
            <person name="Sato F."/>
        </authorList>
    </citation>
    <scope>NUCLEOTIDE SEQUENCE [GENOMIC DNA]</scope>
    <scope>INDUCTION</scope>
    <scope>TISSUE SPECIFICITY</scope>
</reference>
<gene>
    <name type="primary">ERF5</name>
    <name type="synonym">ERF-4</name>
    <name type="synonym">ERF4</name>
</gene>
<feature type="chain" id="PRO_0000112564" description="Ethylene-responsive transcription factor 5">
    <location>
        <begin position="1"/>
        <end position="282"/>
    </location>
</feature>
<feature type="DNA-binding region" description="AP2/ERF" evidence="2">
    <location>
        <begin position="137"/>
        <end position="195"/>
    </location>
</feature>